<gene>
    <name evidence="1" type="primary">rny</name>
    <name type="synonym">cvfA</name>
    <name type="ordered locus">SAS1220</name>
</gene>
<evidence type="ECO:0000255" key="1">
    <source>
        <dbReference type="HAMAP-Rule" id="MF_00335"/>
    </source>
</evidence>
<evidence type="ECO:0000255" key="2">
    <source>
        <dbReference type="PROSITE-ProRule" id="PRU01175"/>
    </source>
</evidence>
<comment type="function">
    <text evidence="1">Endoribonuclease that initiates mRNA decay.</text>
</comment>
<comment type="subcellular location">
    <subcellularLocation>
        <location evidence="1">Cell membrane</location>
        <topology evidence="1">Single-pass membrane protein</topology>
    </subcellularLocation>
</comment>
<comment type="similarity">
    <text evidence="1">Belongs to the RNase Y family.</text>
</comment>
<organism>
    <name type="scientific">Staphylococcus aureus (strain MSSA476)</name>
    <dbReference type="NCBI Taxonomy" id="282459"/>
    <lineage>
        <taxon>Bacteria</taxon>
        <taxon>Bacillati</taxon>
        <taxon>Bacillota</taxon>
        <taxon>Bacilli</taxon>
        <taxon>Bacillales</taxon>
        <taxon>Staphylococcaceae</taxon>
        <taxon>Staphylococcus</taxon>
    </lineage>
</organism>
<sequence length="519" mass="58512">MNLLSLLLILLGIILGVVGGYVVARNLLLQKQSQARQTAEDIVNQAHKEADNIKKEKLLEAKEENQILREQTEAELRERRSELQRQETRLLQKEENLERKSDLLDKKDEILEQKESKIEEKQQQVDAKESSVQTLIMKHEQELERISGLTQEEAINEQLQRVEEELSQDIAVLVKEKEKEAKEKVDKTAKELLATAVQRLAADHTSESTVSVVNLPNDEMKGRIIGREGRNIRTLETLTGIDLIIDDTPEAVILSGFDPIRREIARTALVNLVSDGRIHPGRIEDMVEKARKEVDDIIREAGEQATFEVNAHNMHPDLVKIVGRLNYRTSYGQNVLKHSIEVAHLASMLAAELGEDETLAKRAGLLHDVGKAIDHEVEGSHVEIGVELAKKYGENETVINAIHSHHGDVEPTSIISILVAAADALSAARPGARKETLENYIRRLERLETLSESYDGVEKAFAIQAGREIRVIVSPEEIDDLKSYRLARDIKNQIEDELQYPGHIKVTVVRETRAVEYAK</sequence>
<accession>Q6G9S7</accession>
<keyword id="KW-1003">Cell membrane</keyword>
<keyword id="KW-0255">Endonuclease</keyword>
<keyword id="KW-0378">Hydrolase</keyword>
<keyword id="KW-0472">Membrane</keyword>
<keyword id="KW-0540">Nuclease</keyword>
<keyword id="KW-0694">RNA-binding</keyword>
<keyword id="KW-0812">Transmembrane</keyword>
<keyword id="KW-1133">Transmembrane helix</keyword>
<keyword id="KW-0843">Virulence</keyword>
<dbReference type="EC" id="3.1.-.-" evidence="1"/>
<dbReference type="EMBL" id="BX571857">
    <property type="protein sequence ID" value="CAG42997.1"/>
    <property type="molecule type" value="Genomic_DNA"/>
</dbReference>
<dbReference type="RefSeq" id="WP_001050913.1">
    <property type="nucleotide sequence ID" value="NC_002953.3"/>
</dbReference>
<dbReference type="SMR" id="Q6G9S7"/>
<dbReference type="KEGG" id="sas:SAS1220"/>
<dbReference type="HOGENOM" id="CLU_028328_1_0_9"/>
<dbReference type="GO" id="GO:0005886">
    <property type="term" value="C:plasma membrane"/>
    <property type="evidence" value="ECO:0007669"/>
    <property type="project" value="UniProtKB-SubCell"/>
</dbReference>
<dbReference type="GO" id="GO:0003723">
    <property type="term" value="F:RNA binding"/>
    <property type="evidence" value="ECO:0007669"/>
    <property type="project" value="UniProtKB-UniRule"/>
</dbReference>
<dbReference type="GO" id="GO:0004521">
    <property type="term" value="F:RNA endonuclease activity"/>
    <property type="evidence" value="ECO:0007669"/>
    <property type="project" value="UniProtKB-UniRule"/>
</dbReference>
<dbReference type="GO" id="GO:0006402">
    <property type="term" value="P:mRNA catabolic process"/>
    <property type="evidence" value="ECO:0007669"/>
    <property type="project" value="UniProtKB-UniRule"/>
</dbReference>
<dbReference type="CDD" id="cd00077">
    <property type="entry name" value="HDc"/>
    <property type="match status" value="1"/>
</dbReference>
<dbReference type="CDD" id="cd22431">
    <property type="entry name" value="KH-I_RNaseY"/>
    <property type="match status" value="1"/>
</dbReference>
<dbReference type="FunFam" id="1.10.3210.10:FF:000003">
    <property type="entry name" value="Ribonuclease Y"/>
    <property type="match status" value="1"/>
</dbReference>
<dbReference type="FunFam" id="3.30.1370.10:FF:000006">
    <property type="entry name" value="Ribonuclease Y"/>
    <property type="match status" value="1"/>
</dbReference>
<dbReference type="Gene3D" id="1.10.3210.10">
    <property type="entry name" value="Hypothetical protein af1432"/>
    <property type="match status" value="1"/>
</dbReference>
<dbReference type="Gene3D" id="3.30.1370.10">
    <property type="entry name" value="K Homology domain, type 1"/>
    <property type="match status" value="1"/>
</dbReference>
<dbReference type="HAMAP" id="MF_00335">
    <property type="entry name" value="RNase_Y"/>
    <property type="match status" value="1"/>
</dbReference>
<dbReference type="InterPro" id="IPR003607">
    <property type="entry name" value="HD/PDEase_dom"/>
</dbReference>
<dbReference type="InterPro" id="IPR006674">
    <property type="entry name" value="HD_domain"/>
</dbReference>
<dbReference type="InterPro" id="IPR006675">
    <property type="entry name" value="HDIG_dom"/>
</dbReference>
<dbReference type="InterPro" id="IPR004087">
    <property type="entry name" value="KH_dom"/>
</dbReference>
<dbReference type="InterPro" id="IPR004088">
    <property type="entry name" value="KH_dom_type_1"/>
</dbReference>
<dbReference type="InterPro" id="IPR036612">
    <property type="entry name" value="KH_dom_type_1_sf"/>
</dbReference>
<dbReference type="InterPro" id="IPR017705">
    <property type="entry name" value="Ribonuclease_Y"/>
</dbReference>
<dbReference type="InterPro" id="IPR022711">
    <property type="entry name" value="RNase_Y_N"/>
</dbReference>
<dbReference type="NCBIfam" id="TIGR00277">
    <property type="entry name" value="HDIG"/>
    <property type="match status" value="1"/>
</dbReference>
<dbReference type="NCBIfam" id="TIGR03319">
    <property type="entry name" value="RNase_Y"/>
    <property type="match status" value="1"/>
</dbReference>
<dbReference type="PANTHER" id="PTHR12826">
    <property type="entry name" value="RIBONUCLEASE Y"/>
    <property type="match status" value="1"/>
</dbReference>
<dbReference type="PANTHER" id="PTHR12826:SF15">
    <property type="entry name" value="RIBONUCLEASE Y"/>
    <property type="match status" value="1"/>
</dbReference>
<dbReference type="Pfam" id="PF01966">
    <property type="entry name" value="HD"/>
    <property type="match status" value="1"/>
</dbReference>
<dbReference type="Pfam" id="PF00013">
    <property type="entry name" value="KH_1"/>
    <property type="match status" value="1"/>
</dbReference>
<dbReference type="Pfam" id="PF12072">
    <property type="entry name" value="RNase_Y_N"/>
    <property type="match status" value="1"/>
</dbReference>
<dbReference type="SMART" id="SM00471">
    <property type="entry name" value="HDc"/>
    <property type="match status" value="1"/>
</dbReference>
<dbReference type="SMART" id="SM00322">
    <property type="entry name" value="KH"/>
    <property type="match status" value="1"/>
</dbReference>
<dbReference type="SUPFAM" id="SSF54791">
    <property type="entry name" value="Eukaryotic type KH-domain (KH-domain type I)"/>
    <property type="match status" value="1"/>
</dbReference>
<dbReference type="SUPFAM" id="SSF109604">
    <property type="entry name" value="HD-domain/PDEase-like"/>
    <property type="match status" value="1"/>
</dbReference>
<dbReference type="PROSITE" id="PS51831">
    <property type="entry name" value="HD"/>
    <property type="match status" value="1"/>
</dbReference>
<dbReference type="PROSITE" id="PS50084">
    <property type="entry name" value="KH_TYPE_1"/>
    <property type="match status" value="1"/>
</dbReference>
<feature type="chain" id="PRO_0000163790" description="Ribonuclease Y">
    <location>
        <begin position="1"/>
        <end position="519"/>
    </location>
</feature>
<feature type="transmembrane region" description="Helical" evidence="1">
    <location>
        <begin position="3"/>
        <end position="23"/>
    </location>
</feature>
<feature type="domain" description="KH" evidence="1">
    <location>
        <begin position="209"/>
        <end position="269"/>
    </location>
</feature>
<feature type="domain" description="HD" evidence="2">
    <location>
        <begin position="335"/>
        <end position="428"/>
    </location>
</feature>
<name>RNY_STAAS</name>
<reference key="1">
    <citation type="journal article" date="2004" name="Proc. Natl. Acad. Sci. U.S.A.">
        <title>Complete genomes of two clinical Staphylococcus aureus strains: evidence for the rapid evolution of virulence and drug resistance.</title>
        <authorList>
            <person name="Holden M.T.G."/>
            <person name="Feil E.J."/>
            <person name="Lindsay J.A."/>
            <person name="Peacock S.J."/>
            <person name="Day N.P.J."/>
            <person name="Enright M.C."/>
            <person name="Foster T.J."/>
            <person name="Moore C.E."/>
            <person name="Hurst L."/>
            <person name="Atkin R."/>
            <person name="Barron A."/>
            <person name="Bason N."/>
            <person name="Bentley S.D."/>
            <person name="Chillingworth C."/>
            <person name="Chillingworth T."/>
            <person name="Churcher C."/>
            <person name="Clark L."/>
            <person name="Corton C."/>
            <person name="Cronin A."/>
            <person name="Doggett J."/>
            <person name="Dowd L."/>
            <person name="Feltwell T."/>
            <person name="Hance Z."/>
            <person name="Harris B."/>
            <person name="Hauser H."/>
            <person name="Holroyd S."/>
            <person name="Jagels K."/>
            <person name="James K.D."/>
            <person name="Lennard N."/>
            <person name="Line A."/>
            <person name="Mayes R."/>
            <person name="Moule S."/>
            <person name="Mungall K."/>
            <person name="Ormond D."/>
            <person name="Quail M.A."/>
            <person name="Rabbinowitsch E."/>
            <person name="Rutherford K.M."/>
            <person name="Sanders M."/>
            <person name="Sharp S."/>
            <person name="Simmonds M."/>
            <person name="Stevens K."/>
            <person name="Whitehead S."/>
            <person name="Barrell B.G."/>
            <person name="Spratt B.G."/>
            <person name="Parkhill J."/>
        </authorList>
    </citation>
    <scope>NUCLEOTIDE SEQUENCE [LARGE SCALE GENOMIC DNA]</scope>
    <source>
        <strain>MSSA476</strain>
    </source>
</reference>
<protein>
    <recommendedName>
        <fullName evidence="1">Ribonuclease Y</fullName>
        <shortName evidence="1">RNase Y</shortName>
        <ecNumber evidence="1">3.1.-.-</ecNumber>
    </recommendedName>
    <alternativeName>
        <fullName>Conserved virulence factor A</fullName>
    </alternativeName>
</protein>
<proteinExistence type="inferred from homology"/>